<organism>
    <name type="scientific">Burkholderia ambifaria (strain MC40-6)</name>
    <dbReference type="NCBI Taxonomy" id="398577"/>
    <lineage>
        <taxon>Bacteria</taxon>
        <taxon>Pseudomonadati</taxon>
        <taxon>Pseudomonadota</taxon>
        <taxon>Betaproteobacteria</taxon>
        <taxon>Burkholderiales</taxon>
        <taxon>Burkholderiaceae</taxon>
        <taxon>Burkholderia</taxon>
        <taxon>Burkholderia cepacia complex</taxon>
    </lineage>
</organism>
<accession>B1YUJ7</accession>
<comment type="catalytic activity">
    <reaction evidence="1">
        <text>(S)-4-amino-5-oxopentanoate = 5-aminolevulinate</text>
        <dbReference type="Rhea" id="RHEA:14265"/>
        <dbReference type="ChEBI" id="CHEBI:57501"/>
        <dbReference type="ChEBI" id="CHEBI:356416"/>
        <dbReference type="EC" id="5.4.3.8"/>
    </reaction>
</comment>
<comment type="cofactor">
    <cofactor evidence="1">
        <name>pyridoxal 5'-phosphate</name>
        <dbReference type="ChEBI" id="CHEBI:597326"/>
    </cofactor>
</comment>
<comment type="pathway">
    <text evidence="1">Porphyrin-containing compound metabolism; protoporphyrin-IX biosynthesis; 5-aminolevulinate from L-glutamyl-tRNA(Glu): step 2/2.</text>
</comment>
<comment type="subunit">
    <text evidence="1">Homodimer.</text>
</comment>
<comment type="subcellular location">
    <subcellularLocation>
        <location evidence="1">Cytoplasm</location>
    </subcellularLocation>
</comment>
<comment type="similarity">
    <text evidence="1">Belongs to the class-III pyridoxal-phosphate-dependent aminotransferase family. HemL subfamily.</text>
</comment>
<proteinExistence type="inferred from homology"/>
<gene>
    <name evidence="1" type="primary">hemL</name>
    <name type="ordered locus">BamMC406_0831</name>
</gene>
<name>GSA_BURA4</name>
<dbReference type="EC" id="5.4.3.8" evidence="1"/>
<dbReference type="EMBL" id="CP001025">
    <property type="protein sequence ID" value="ACB63324.1"/>
    <property type="molecule type" value="Genomic_DNA"/>
</dbReference>
<dbReference type="RefSeq" id="WP_012363276.1">
    <property type="nucleotide sequence ID" value="NC_010551.1"/>
</dbReference>
<dbReference type="SMR" id="B1YUJ7"/>
<dbReference type="KEGG" id="bac:BamMC406_0831"/>
<dbReference type="HOGENOM" id="CLU_016922_1_5_4"/>
<dbReference type="OrthoDB" id="3398487at2"/>
<dbReference type="UniPathway" id="UPA00251">
    <property type="reaction ID" value="UER00317"/>
</dbReference>
<dbReference type="Proteomes" id="UP000001680">
    <property type="component" value="Chromosome 1"/>
</dbReference>
<dbReference type="GO" id="GO:0005737">
    <property type="term" value="C:cytoplasm"/>
    <property type="evidence" value="ECO:0007669"/>
    <property type="project" value="UniProtKB-SubCell"/>
</dbReference>
<dbReference type="GO" id="GO:0042286">
    <property type="term" value="F:glutamate-1-semialdehyde 2,1-aminomutase activity"/>
    <property type="evidence" value="ECO:0007669"/>
    <property type="project" value="UniProtKB-UniRule"/>
</dbReference>
<dbReference type="GO" id="GO:0030170">
    <property type="term" value="F:pyridoxal phosphate binding"/>
    <property type="evidence" value="ECO:0007669"/>
    <property type="project" value="InterPro"/>
</dbReference>
<dbReference type="GO" id="GO:0008483">
    <property type="term" value="F:transaminase activity"/>
    <property type="evidence" value="ECO:0007669"/>
    <property type="project" value="InterPro"/>
</dbReference>
<dbReference type="GO" id="GO:0006782">
    <property type="term" value="P:protoporphyrinogen IX biosynthetic process"/>
    <property type="evidence" value="ECO:0007669"/>
    <property type="project" value="UniProtKB-UniRule"/>
</dbReference>
<dbReference type="CDD" id="cd00610">
    <property type="entry name" value="OAT_like"/>
    <property type="match status" value="1"/>
</dbReference>
<dbReference type="FunFam" id="3.40.640.10:FF:000021">
    <property type="entry name" value="Glutamate-1-semialdehyde 2,1-aminomutase"/>
    <property type="match status" value="1"/>
</dbReference>
<dbReference type="Gene3D" id="3.90.1150.10">
    <property type="entry name" value="Aspartate Aminotransferase, domain 1"/>
    <property type="match status" value="1"/>
</dbReference>
<dbReference type="Gene3D" id="3.40.640.10">
    <property type="entry name" value="Type I PLP-dependent aspartate aminotransferase-like (Major domain)"/>
    <property type="match status" value="1"/>
</dbReference>
<dbReference type="HAMAP" id="MF_00375">
    <property type="entry name" value="HemL_aminotrans_3"/>
    <property type="match status" value="1"/>
</dbReference>
<dbReference type="InterPro" id="IPR004639">
    <property type="entry name" value="4pyrrol_synth_GluAld_NH2Trfase"/>
</dbReference>
<dbReference type="InterPro" id="IPR005814">
    <property type="entry name" value="Aminotrans_3"/>
</dbReference>
<dbReference type="InterPro" id="IPR049704">
    <property type="entry name" value="Aminotrans_3_PPA_site"/>
</dbReference>
<dbReference type="InterPro" id="IPR015424">
    <property type="entry name" value="PyrdxlP-dep_Trfase"/>
</dbReference>
<dbReference type="InterPro" id="IPR015421">
    <property type="entry name" value="PyrdxlP-dep_Trfase_major"/>
</dbReference>
<dbReference type="InterPro" id="IPR015422">
    <property type="entry name" value="PyrdxlP-dep_Trfase_small"/>
</dbReference>
<dbReference type="NCBIfam" id="TIGR00713">
    <property type="entry name" value="hemL"/>
    <property type="match status" value="1"/>
</dbReference>
<dbReference type="NCBIfam" id="NF000818">
    <property type="entry name" value="PRK00062.1"/>
    <property type="match status" value="1"/>
</dbReference>
<dbReference type="PANTHER" id="PTHR43713">
    <property type="entry name" value="GLUTAMATE-1-SEMIALDEHYDE 2,1-AMINOMUTASE"/>
    <property type="match status" value="1"/>
</dbReference>
<dbReference type="PANTHER" id="PTHR43713:SF3">
    <property type="entry name" value="GLUTAMATE-1-SEMIALDEHYDE 2,1-AMINOMUTASE 1, CHLOROPLASTIC-RELATED"/>
    <property type="match status" value="1"/>
</dbReference>
<dbReference type="Pfam" id="PF00202">
    <property type="entry name" value="Aminotran_3"/>
    <property type="match status" value="1"/>
</dbReference>
<dbReference type="SUPFAM" id="SSF53383">
    <property type="entry name" value="PLP-dependent transferases"/>
    <property type="match status" value="1"/>
</dbReference>
<dbReference type="PROSITE" id="PS00600">
    <property type="entry name" value="AA_TRANSFER_CLASS_3"/>
    <property type="match status" value="1"/>
</dbReference>
<sequence length="427" mass="44973">MSNNQILFERAQKTIPGGVNSPVRAFRSVGGTPRFVSRAQGPYFWDADGKQYIDYIGSWGPMIVGHVHPEVLSAVQKVLADGFSFGAPTEAEIEIAEEICKLVPSIEQVRMVSSGTEATMSALRLARGFTGRSRIVKFEGCYHGHADSLLVKAGSGLLTFGNPTSAGVPADIAKHTTVLEYNNVAALEEAFGAFGDEIAAVIVEPVAGNMNLVRGTPEFLNALRALCTKHGAVLIFDEVMCGFRVALGGAQQHYGITADLTCLGKVIGGGMPAAAFGGRRDIMAHLAPLGGVYQAGTLSGNPIAVAAGLKTLQLIQAPGFYDALTAQTKRLADGLAAEARAAGVPFAADSIGAMFGLYFAERVPTSFAEVTKSDTERFNRFFHLMLDEGVYFAPSAYEAGFVSSTHDDAVIDATLAAARRAFAALAA</sequence>
<feature type="chain" id="PRO_1000121858" description="Glutamate-1-semialdehyde 2,1-aminomutase">
    <location>
        <begin position="1"/>
        <end position="427"/>
    </location>
</feature>
<feature type="modified residue" description="N6-(pyridoxal phosphate)lysine" evidence="1">
    <location>
        <position position="265"/>
    </location>
</feature>
<reference key="1">
    <citation type="submission" date="2008-04" db="EMBL/GenBank/DDBJ databases">
        <title>Complete sequence of chromosome 1 of Burkholderia ambifaria MC40-6.</title>
        <authorList>
            <person name="Copeland A."/>
            <person name="Lucas S."/>
            <person name="Lapidus A."/>
            <person name="Glavina del Rio T."/>
            <person name="Dalin E."/>
            <person name="Tice H."/>
            <person name="Pitluck S."/>
            <person name="Chain P."/>
            <person name="Malfatti S."/>
            <person name="Shin M."/>
            <person name="Vergez L."/>
            <person name="Lang D."/>
            <person name="Schmutz J."/>
            <person name="Larimer F."/>
            <person name="Land M."/>
            <person name="Hauser L."/>
            <person name="Kyrpides N."/>
            <person name="Lykidis A."/>
            <person name="Ramette A."/>
            <person name="Konstantinidis K."/>
            <person name="Tiedje J."/>
            <person name="Richardson P."/>
        </authorList>
    </citation>
    <scope>NUCLEOTIDE SEQUENCE [LARGE SCALE GENOMIC DNA]</scope>
    <source>
        <strain>MC40-6</strain>
    </source>
</reference>
<protein>
    <recommendedName>
        <fullName evidence="1">Glutamate-1-semialdehyde 2,1-aminomutase</fullName>
        <shortName evidence="1">GSA</shortName>
        <ecNumber evidence="1">5.4.3.8</ecNumber>
    </recommendedName>
    <alternativeName>
        <fullName evidence="1">Glutamate-1-semialdehyde aminotransferase</fullName>
        <shortName evidence="1">GSA-AT</shortName>
    </alternativeName>
</protein>
<evidence type="ECO:0000255" key="1">
    <source>
        <dbReference type="HAMAP-Rule" id="MF_00375"/>
    </source>
</evidence>
<keyword id="KW-0963">Cytoplasm</keyword>
<keyword id="KW-0413">Isomerase</keyword>
<keyword id="KW-0627">Porphyrin biosynthesis</keyword>
<keyword id="KW-0663">Pyridoxal phosphate</keyword>